<accession>Q9ZUB3</accession>
<accession>F4I7M4</accession>
<comment type="catalytic activity">
    <reaction>
        <text>S-adenosyl 3-(methylsulfanyl)propylamine + putrescine = S-methyl-5'-thioadenosine + spermidine + H(+)</text>
        <dbReference type="Rhea" id="RHEA:12721"/>
        <dbReference type="ChEBI" id="CHEBI:15378"/>
        <dbReference type="ChEBI" id="CHEBI:17509"/>
        <dbReference type="ChEBI" id="CHEBI:57443"/>
        <dbReference type="ChEBI" id="CHEBI:57834"/>
        <dbReference type="ChEBI" id="CHEBI:326268"/>
        <dbReference type="EC" id="2.5.1.16"/>
    </reaction>
</comment>
<comment type="pathway">
    <text>Amine and polyamine biosynthesis; spermidine biosynthesis; spermidine from putrescine: step 1/1.</text>
</comment>
<comment type="subunit">
    <text evidence="3 4">Homotetramer and heterodimer. Component of a multiprotein complex. Interacts with SPMS and SPDSYN2.</text>
</comment>
<comment type="interaction">
    <interactant intactId="EBI-1770123">
        <id>Q9ZUB3</id>
    </interactant>
    <interactant intactId="EBI-1770100">
        <id>O48661</id>
        <label>SPDSYN2</label>
    </interactant>
    <organismsDiffer>false</organismsDiffer>
    <experiments>7</experiments>
</comment>
<comment type="interaction">
    <interactant intactId="EBI-1770123">
        <id>Q9ZUB3</id>
    </interactant>
    <interactant intactId="EBI-1770109">
        <id>Q94BN2</id>
        <label>SPMS</label>
    </interactant>
    <organismsDiffer>false</organismsDiffer>
    <experiments>4</experiments>
</comment>
<comment type="alternative products">
    <event type="alternative splicing"/>
    <isoform>
        <id>Q9ZUB3-1</id>
        <name>1</name>
        <sequence type="displayed"/>
    </isoform>
    <text>A number of isoforms are produced. According to EST sequences.</text>
</comment>
<comment type="similarity">
    <text evidence="5">Belongs to the spermidine/spermine synthase family.</text>
</comment>
<keyword id="KW-0002">3D-structure</keyword>
<keyword id="KW-0025">Alternative splicing</keyword>
<keyword id="KW-0620">Polyamine biosynthesis</keyword>
<keyword id="KW-1185">Reference proteome</keyword>
<keyword id="KW-0745">Spermidine biosynthesis</keyword>
<keyword id="KW-0808">Transferase</keyword>
<proteinExistence type="evidence at protein level"/>
<feature type="chain" id="PRO_0000156448" description="Spermidine synthase 1">
    <location>
        <begin position="1"/>
        <end position="334"/>
    </location>
</feature>
<feature type="domain" description="PABS">
    <location>
        <begin position="45"/>
        <end position="282"/>
    </location>
</feature>
<feature type="region of interest" description="Disordered" evidence="2">
    <location>
        <begin position="1"/>
        <end position="35"/>
    </location>
</feature>
<feature type="compositionally biased region" description="Basic and acidic residues" evidence="2">
    <location>
        <begin position="1"/>
        <end position="16"/>
    </location>
</feature>
<feature type="active site" description="Proton acceptor" evidence="1">
    <location>
        <position position="201"/>
    </location>
</feature>
<feature type="binding site" evidence="1">
    <location>
        <position position="76"/>
    </location>
    <ligand>
        <name>S-adenosyl 3-(methylsulfanyl)propylamine</name>
        <dbReference type="ChEBI" id="CHEBI:57443"/>
    </ligand>
</feature>
<feature type="binding site" evidence="1">
    <location>
        <position position="106"/>
    </location>
    <ligand>
        <name>putrescine</name>
        <dbReference type="ChEBI" id="CHEBI:326268"/>
    </ligand>
</feature>
<feature type="binding site" evidence="1">
    <location>
        <position position="107"/>
    </location>
    <ligand>
        <name>S-adenosyl 3-(methylsulfanyl)propylamine</name>
        <dbReference type="ChEBI" id="CHEBI:57443"/>
    </ligand>
</feature>
<feature type="binding site" evidence="1">
    <location>
        <position position="131"/>
    </location>
    <ligand>
        <name>S-adenosyl 3-(methylsulfanyl)propylamine</name>
        <dbReference type="ChEBI" id="CHEBI:57443"/>
    </ligand>
</feature>
<feature type="binding site" evidence="1">
    <location>
        <position position="151"/>
    </location>
    <ligand>
        <name>S-adenosyl 3-(methylsulfanyl)propylamine</name>
        <dbReference type="ChEBI" id="CHEBI:57443"/>
    </ligand>
</feature>
<feature type="binding site" evidence="1">
    <location>
        <begin position="182"/>
        <end position="183"/>
    </location>
    <ligand>
        <name>S-adenosyl 3-(methylsulfanyl)propylamine</name>
        <dbReference type="ChEBI" id="CHEBI:57443"/>
    </ligand>
</feature>
<feature type="binding site" evidence="1">
    <location>
        <begin position="201"/>
        <end position="204"/>
    </location>
    <ligand>
        <name>putrescine</name>
        <dbReference type="ChEBI" id="CHEBI:326268"/>
    </ligand>
</feature>
<feature type="binding site" evidence="1">
    <location>
        <position position="201"/>
    </location>
    <ligand>
        <name>S-adenosyl 3-(methylsulfanyl)propylamine</name>
        <dbReference type="ChEBI" id="CHEBI:57443"/>
    </ligand>
</feature>
<feature type="binding site" evidence="1">
    <location>
        <position position="270"/>
    </location>
    <ligand>
        <name>putrescine</name>
        <dbReference type="ChEBI" id="CHEBI:326268"/>
    </ligand>
</feature>
<feature type="strand" evidence="8">
    <location>
        <begin position="42"/>
        <end position="44"/>
    </location>
</feature>
<feature type="strand" evidence="7">
    <location>
        <begin position="45"/>
        <end position="50"/>
    </location>
</feature>
<feature type="strand" evidence="7">
    <location>
        <begin position="58"/>
        <end position="72"/>
    </location>
</feature>
<feature type="strand" evidence="7">
    <location>
        <begin position="77"/>
        <end position="86"/>
    </location>
</feature>
<feature type="strand" evidence="7">
    <location>
        <begin position="88"/>
        <end position="92"/>
    </location>
</feature>
<feature type="strand" evidence="7">
    <location>
        <begin position="95"/>
        <end position="99"/>
    </location>
</feature>
<feature type="turn" evidence="7">
    <location>
        <begin position="100"/>
        <end position="102"/>
    </location>
</feature>
<feature type="helix" evidence="7">
    <location>
        <begin position="103"/>
        <end position="115"/>
    </location>
</feature>
<feature type="strand" evidence="7">
    <location>
        <begin position="118"/>
        <end position="120"/>
    </location>
</feature>
<feature type="strand" evidence="7">
    <location>
        <begin position="123"/>
        <end position="128"/>
    </location>
</feature>
<feature type="strand" evidence="7">
    <location>
        <begin position="130"/>
        <end position="132"/>
    </location>
</feature>
<feature type="helix" evidence="7">
    <location>
        <begin position="133"/>
        <end position="139"/>
    </location>
</feature>
<feature type="strand" evidence="7">
    <location>
        <begin position="146"/>
        <end position="152"/>
    </location>
</feature>
<feature type="helix" evidence="7">
    <location>
        <begin position="154"/>
        <end position="163"/>
    </location>
</feature>
<feature type="helix" evidence="7">
    <location>
        <begin position="165"/>
        <end position="168"/>
    </location>
</feature>
<feature type="helix" evidence="7">
    <location>
        <begin position="169"/>
        <end position="172"/>
    </location>
</feature>
<feature type="strand" evidence="7">
    <location>
        <begin position="176"/>
        <end position="181"/>
    </location>
</feature>
<feature type="helix" evidence="7">
    <location>
        <begin position="183"/>
        <end position="188"/>
    </location>
</feature>
<feature type="strand" evidence="7">
    <location>
        <begin position="195"/>
        <end position="200"/>
    </location>
</feature>
<feature type="strand" evidence="7">
    <location>
        <begin position="205"/>
        <end position="207"/>
    </location>
</feature>
<feature type="helix" evidence="7">
    <location>
        <begin position="210"/>
        <end position="213"/>
    </location>
</feature>
<feature type="helix" evidence="7">
    <location>
        <begin position="215"/>
        <end position="224"/>
    </location>
</feature>
<feature type="strand" evidence="7">
    <location>
        <begin position="225"/>
        <end position="234"/>
    </location>
</feature>
<feature type="turn" evidence="7">
    <location>
        <begin position="238"/>
        <end position="240"/>
    </location>
</feature>
<feature type="helix" evidence="7">
    <location>
        <begin position="242"/>
        <end position="255"/>
    </location>
</feature>
<feature type="strand" evidence="7">
    <location>
        <begin position="260"/>
        <end position="266"/>
    </location>
</feature>
<feature type="helix" evidence="7">
    <location>
        <begin position="271"/>
        <end position="273"/>
    </location>
</feature>
<feature type="strand" evidence="7">
    <location>
        <begin position="274"/>
        <end position="281"/>
    </location>
</feature>
<feature type="strand" evidence="7">
    <location>
        <begin position="283"/>
        <end position="285"/>
    </location>
</feature>
<feature type="strand" evidence="6">
    <location>
        <begin position="289"/>
        <end position="291"/>
    </location>
</feature>
<feature type="helix" evidence="7">
    <location>
        <begin position="296"/>
        <end position="298"/>
    </location>
</feature>
<feature type="helix" evidence="6">
    <location>
        <begin position="299"/>
        <end position="301"/>
    </location>
</feature>
<feature type="turn" evidence="6">
    <location>
        <begin position="302"/>
        <end position="304"/>
    </location>
</feature>
<feature type="helix" evidence="7">
    <location>
        <begin position="312"/>
        <end position="317"/>
    </location>
</feature>
<feature type="helix" evidence="7">
    <location>
        <begin position="323"/>
        <end position="329"/>
    </location>
</feature>
<gene>
    <name type="primary">SPDSYN1</name>
    <name type="ordered locus">At1g23820</name>
    <name type="ORF">F5O8.38</name>
</gene>
<protein>
    <recommendedName>
        <fullName>Spermidine synthase 1</fullName>
        <shortName>SPDSY 1</shortName>
        <ecNumber>2.5.1.16</ecNumber>
    </recommendedName>
    <alternativeName>
        <fullName>Putrescine aminopropyltransferase 1</fullName>
    </alternativeName>
</protein>
<evidence type="ECO:0000250" key="1"/>
<evidence type="ECO:0000256" key="2">
    <source>
        <dbReference type="SAM" id="MobiDB-lite"/>
    </source>
</evidence>
<evidence type="ECO:0000269" key="3">
    <source>
    </source>
</evidence>
<evidence type="ECO:0000269" key="4">
    <source ref="6"/>
</evidence>
<evidence type="ECO:0000305" key="5"/>
<evidence type="ECO:0007829" key="6">
    <source>
        <dbReference type="PDB" id="1XJ5"/>
    </source>
</evidence>
<evidence type="ECO:0007829" key="7">
    <source>
        <dbReference type="PDB" id="6O63"/>
    </source>
</evidence>
<evidence type="ECO:0007829" key="8">
    <source>
        <dbReference type="PDB" id="6O65"/>
    </source>
</evidence>
<name>SPDS1_ARATH</name>
<reference key="1">
    <citation type="submission" date="1999-11" db="EMBL/GenBank/DDBJ databases">
        <title>Plant aminopropyltransferase families.</title>
        <authorList>
            <person name="Franceschetti M."/>
            <person name="Michael A.J."/>
        </authorList>
    </citation>
    <scope>NUCLEOTIDE SEQUENCE [GENOMIC DNA / MRNA]</scope>
    <source>
        <strain>cv. Columbia</strain>
    </source>
</reference>
<reference key="2">
    <citation type="journal article" date="2000" name="Nature">
        <title>Sequence and analysis of chromosome 1 of the plant Arabidopsis thaliana.</title>
        <authorList>
            <person name="Theologis A."/>
            <person name="Ecker J.R."/>
            <person name="Palm C.J."/>
            <person name="Federspiel N.A."/>
            <person name="Kaul S."/>
            <person name="White O."/>
            <person name="Alonso J."/>
            <person name="Altafi H."/>
            <person name="Araujo R."/>
            <person name="Bowman C.L."/>
            <person name="Brooks S.Y."/>
            <person name="Buehler E."/>
            <person name="Chan A."/>
            <person name="Chao Q."/>
            <person name="Chen H."/>
            <person name="Cheuk R.F."/>
            <person name="Chin C.W."/>
            <person name="Chung M.K."/>
            <person name="Conn L."/>
            <person name="Conway A.B."/>
            <person name="Conway A.R."/>
            <person name="Creasy T.H."/>
            <person name="Dewar K."/>
            <person name="Dunn P."/>
            <person name="Etgu P."/>
            <person name="Feldblyum T.V."/>
            <person name="Feng J.-D."/>
            <person name="Fong B."/>
            <person name="Fujii C.Y."/>
            <person name="Gill J.E."/>
            <person name="Goldsmith A.D."/>
            <person name="Haas B."/>
            <person name="Hansen N.F."/>
            <person name="Hughes B."/>
            <person name="Huizar L."/>
            <person name="Hunter J.L."/>
            <person name="Jenkins J."/>
            <person name="Johnson-Hopson C."/>
            <person name="Khan S."/>
            <person name="Khaykin E."/>
            <person name="Kim C.J."/>
            <person name="Koo H.L."/>
            <person name="Kremenetskaia I."/>
            <person name="Kurtz D.B."/>
            <person name="Kwan A."/>
            <person name="Lam B."/>
            <person name="Langin-Hooper S."/>
            <person name="Lee A."/>
            <person name="Lee J.M."/>
            <person name="Lenz C.A."/>
            <person name="Li J.H."/>
            <person name="Li Y.-P."/>
            <person name="Lin X."/>
            <person name="Liu S.X."/>
            <person name="Liu Z.A."/>
            <person name="Luros J.S."/>
            <person name="Maiti R."/>
            <person name="Marziali A."/>
            <person name="Militscher J."/>
            <person name="Miranda M."/>
            <person name="Nguyen M."/>
            <person name="Nierman W.C."/>
            <person name="Osborne B.I."/>
            <person name="Pai G."/>
            <person name="Peterson J."/>
            <person name="Pham P.K."/>
            <person name="Rizzo M."/>
            <person name="Rooney T."/>
            <person name="Rowley D."/>
            <person name="Sakano H."/>
            <person name="Salzberg S.L."/>
            <person name="Schwartz J.R."/>
            <person name="Shinn P."/>
            <person name="Southwick A.M."/>
            <person name="Sun H."/>
            <person name="Tallon L.J."/>
            <person name="Tambunga G."/>
            <person name="Toriumi M.J."/>
            <person name="Town C.D."/>
            <person name="Utterback T."/>
            <person name="Van Aken S."/>
            <person name="Vaysberg M."/>
            <person name="Vysotskaia V.S."/>
            <person name="Walker M."/>
            <person name="Wu D."/>
            <person name="Yu G."/>
            <person name="Fraser C.M."/>
            <person name="Venter J.C."/>
            <person name="Davis R.W."/>
        </authorList>
    </citation>
    <scope>NUCLEOTIDE SEQUENCE [LARGE SCALE GENOMIC DNA]</scope>
    <source>
        <strain>cv. Columbia</strain>
    </source>
</reference>
<reference key="3">
    <citation type="journal article" date="2017" name="Plant J.">
        <title>Araport11: a complete reannotation of the Arabidopsis thaliana reference genome.</title>
        <authorList>
            <person name="Cheng C.Y."/>
            <person name="Krishnakumar V."/>
            <person name="Chan A.P."/>
            <person name="Thibaud-Nissen F."/>
            <person name="Schobel S."/>
            <person name="Town C.D."/>
        </authorList>
    </citation>
    <scope>GENOME REANNOTATION</scope>
    <source>
        <strain>cv. Columbia</strain>
    </source>
</reference>
<reference key="4">
    <citation type="journal article" date="2003" name="Science">
        <title>Empirical analysis of transcriptional activity in the Arabidopsis genome.</title>
        <authorList>
            <person name="Yamada K."/>
            <person name="Lim J."/>
            <person name="Dale J.M."/>
            <person name="Chen H."/>
            <person name="Shinn P."/>
            <person name="Palm C.J."/>
            <person name="Southwick A.M."/>
            <person name="Wu H.C."/>
            <person name="Kim C.J."/>
            <person name="Nguyen M."/>
            <person name="Pham P.K."/>
            <person name="Cheuk R.F."/>
            <person name="Karlin-Newmann G."/>
            <person name="Liu S.X."/>
            <person name="Lam B."/>
            <person name="Sakano H."/>
            <person name="Wu T."/>
            <person name="Yu G."/>
            <person name="Miranda M."/>
            <person name="Quach H.L."/>
            <person name="Tripp M."/>
            <person name="Chang C.H."/>
            <person name="Lee J.M."/>
            <person name="Toriumi M.J."/>
            <person name="Chan M.M."/>
            <person name="Tang C.C."/>
            <person name="Onodera C.S."/>
            <person name="Deng J.M."/>
            <person name="Akiyama K."/>
            <person name="Ansari Y."/>
            <person name="Arakawa T."/>
            <person name="Banh J."/>
            <person name="Banno F."/>
            <person name="Bowser L."/>
            <person name="Brooks S.Y."/>
            <person name="Carninci P."/>
            <person name="Chao Q."/>
            <person name="Choy N."/>
            <person name="Enju A."/>
            <person name="Goldsmith A.D."/>
            <person name="Gurjal M."/>
            <person name="Hansen N.F."/>
            <person name="Hayashizaki Y."/>
            <person name="Johnson-Hopson C."/>
            <person name="Hsuan V.W."/>
            <person name="Iida K."/>
            <person name="Karnes M."/>
            <person name="Khan S."/>
            <person name="Koesema E."/>
            <person name="Ishida J."/>
            <person name="Jiang P.X."/>
            <person name="Jones T."/>
            <person name="Kawai J."/>
            <person name="Kamiya A."/>
            <person name="Meyers C."/>
            <person name="Nakajima M."/>
            <person name="Narusaka M."/>
            <person name="Seki M."/>
            <person name="Sakurai T."/>
            <person name="Satou M."/>
            <person name="Tamse R."/>
            <person name="Vaysberg M."/>
            <person name="Wallender E.K."/>
            <person name="Wong C."/>
            <person name="Yamamura Y."/>
            <person name="Yuan S."/>
            <person name="Shinozaki K."/>
            <person name="Davis R.W."/>
            <person name="Theologis A."/>
            <person name="Ecker J.R."/>
        </authorList>
    </citation>
    <scope>NUCLEOTIDE SEQUENCE [LARGE SCALE MRNA]</scope>
    <source>
        <strain>cv. Columbia</strain>
    </source>
</reference>
<reference key="5">
    <citation type="journal article" date="2002" name="Plant Cell">
        <title>A polyamine metabolon involving aminopropyl transferase complexes in Arabidopsis.</title>
        <authorList>
            <person name="Panicot M."/>
            <person name="Minguet E.G."/>
            <person name="Ferrando A."/>
            <person name="Alcazar R."/>
            <person name="Blazquez M.A."/>
            <person name="Carbonell J."/>
            <person name="Altabella T."/>
            <person name="Koncz C."/>
            <person name="Tiburcio A.F."/>
        </authorList>
    </citation>
    <scope>INTERACTION WITH SPMS AND SPDSYN2</scope>
</reference>
<reference key="6">
    <citation type="submission" date="2005-02" db="PDB data bank">
        <title>X-ray structure of spermidine synthase from Arabidopsis thaliana gene AT1G23820.</title>
        <authorList>
            <consortium name="Center for eukaryotic structural genomics (CESG)"/>
        </authorList>
    </citation>
    <scope>X-RAY CRYSTALLOGRAPHY (2.70 ANGSTROMS) OF 2-334</scope>
    <scope>SUBUNIT</scope>
</reference>
<sequence length="334" mass="36553">MDAKETSATDLKRPREEDDNGGAATMETENGDQKKEPACFSTVIPGWFSEMSPMWPGEAHSLKVEKVLFQGKSDYQDVIVFQSATYGKVLVLDGVIQLTERDECAYQEMITHLPLCSIPNPKKVLVIGGGDGGVLREVARHASIEQIDMCEIDKMVVDVSKQFFPDVAIGYEDPRVNLVIGDGVAFLKNAAEGSYDAVIVDSSDPIGPAKELFEKPFFQSVARALRPGGVVCTQAESLWLHMDIIEDIVSNCREIFKGSVNYAWTSVPTYPSGVIGFMLCSTEGPDVDFKHPLNPIDESSSKSNGPLKFYNAEIHSAAFCLPSFAKKVIESKAN</sequence>
<dbReference type="EC" id="2.5.1.16"/>
<dbReference type="EMBL" id="AJ252215">
    <property type="protein sequence ID" value="CAB64644.1"/>
    <property type="molecule type" value="Genomic_DNA"/>
</dbReference>
<dbReference type="EMBL" id="AJ251296">
    <property type="protein sequence ID" value="CAB61614.1"/>
    <property type="molecule type" value="mRNA"/>
</dbReference>
<dbReference type="EMBL" id="AC005990">
    <property type="protein sequence ID" value="AAC98040.1"/>
    <property type="molecule type" value="Genomic_DNA"/>
</dbReference>
<dbReference type="EMBL" id="CP002684">
    <property type="protein sequence ID" value="AEE30436.2"/>
    <property type="molecule type" value="Genomic_DNA"/>
</dbReference>
<dbReference type="EMBL" id="AY062593">
    <property type="protein sequence ID" value="AAL32671.1"/>
    <property type="molecule type" value="mRNA"/>
</dbReference>
<dbReference type="EMBL" id="AY093360">
    <property type="protein sequence ID" value="AAM13359.1"/>
    <property type="molecule type" value="mRNA"/>
</dbReference>
<dbReference type="PIR" id="F86372">
    <property type="entry name" value="F86372"/>
</dbReference>
<dbReference type="RefSeq" id="NP_173794.3">
    <molecule id="Q9ZUB3-1"/>
    <property type="nucleotide sequence ID" value="NM_102230.5"/>
</dbReference>
<dbReference type="PDB" id="1XJ5">
    <property type="method" value="X-ray"/>
    <property type="resolution" value="2.70 A"/>
    <property type="chains" value="A/B/C/D=2-334"/>
</dbReference>
<dbReference type="PDB" id="2Q41">
    <property type="method" value="X-ray"/>
    <property type="resolution" value="2.70 A"/>
    <property type="chains" value="A/B/C/D=2-334"/>
</dbReference>
<dbReference type="PDB" id="6O63">
    <property type="method" value="X-ray"/>
    <property type="resolution" value="1.80 A"/>
    <property type="chains" value="A/B/C/D=1-334"/>
</dbReference>
<dbReference type="PDB" id="6O65">
    <property type="method" value="X-ray"/>
    <property type="resolution" value="1.80 A"/>
    <property type="chains" value="A/B/C/D/E/F/G/H=34-334"/>
</dbReference>
<dbReference type="PDBsum" id="1XJ5"/>
<dbReference type="PDBsum" id="2Q41"/>
<dbReference type="PDBsum" id="6O63"/>
<dbReference type="PDBsum" id="6O65"/>
<dbReference type="SMR" id="Q9ZUB3"/>
<dbReference type="BioGRID" id="24231">
    <property type="interactions" value="10"/>
</dbReference>
<dbReference type="FunCoup" id="Q9ZUB3">
    <property type="interactions" value="3467"/>
</dbReference>
<dbReference type="IntAct" id="Q9ZUB3">
    <property type="interactions" value="2"/>
</dbReference>
<dbReference type="STRING" id="3702.Q9ZUB3"/>
<dbReference type="iPTMnet" id="Q9ZUB3"/>
<dbReference type="PaxDb" id="3702-AT1G23820.1"/>
<dbReference type="ProteomicsDB" id="232482">
    <molecule id="Q9ZUB3-1"/>
</dbReference>
<dbReference type="EnsemblPlants" id="AT1G23820.1">
    <molecule id="Q9ZUB3-1"/>
    <property type="protein sequence ID" value="AT1G23820.1"/>
    <property type="gene ID" value="AT1G23820"/>
</dbReference>
<dbReference type="GeneID" id="838993"/>
<dbReference type="Gramene" id="AT1G23820.1">
    <molecule id="Q9ZUB3-1"/>
    <property type="protein sequence ID" value="AT1G23820.1"/>
    <property type="gene ID" value="AT1G23820"/>
</dbReference>
<dbReference type="KEGG" id="ath:AT1G23820"/>
<dbReference type="Araport" id="AT1G23820"/>
<dbReference type="TAIR" id="AT1G23820">
    <property type="gene designation" value="SPDS1"/>
</dbReference>
<dbReference type="eggNOG" id="KOG1562">
    <property type="taxonomic scope" value="Eukaryota"/>
</dbReference>
<dbReference type="HOGENOM" id="CLU_048199_3_2_1"/>
<dbReference type="InParanoid" id="Q9ZUB3"/>
<dbReference type="OMA" id="VANCCQI"/>
<dbReference type="PhylomeDB" id="Q9ZUB3"/>
<dbReference type="BRENDA" id="2.5.1.16">
    <property type="organism ID" value="399"/>
</dbReference>
<dbReference type="UniPathway" id="UPA00248">
    <property type="reaction ID" value="UER00314"/>
</dbReference>
<dbReference type="CD-CODE" id="4299E36E">
    <property type="entry name" value="Nucleolus"/>
</dbReference>
<dbReference type="EvolutionaryTrace" id="Q9ZUB3"/>
<dbReference type="PRO" id="PR:Q9ZUB3"/>
<dbReference type="Proteomes" id="UP000006548">
    <property type="component" value="Chromosome 1"/>
</dbReference>
<dbReference type="ExpressionAtlas" id="Q9ZUB3">
    <property type="expression patterns" value="baseline and differential"/>
</dbReference>
<dbReference type="GO" id="GO:0004766">
    <property type="term" value="F:spermidine synthase activity"/>
    <property type="evidence" value="ECO:0007669"/>
    <property type="project" value="UniProtKB-EC"/>
</dbReference>
<dbReference type="GO" id="GO:0008295">
    <property type="term" value="P:spermidine biosynthetic process"/>
    <property type="evidence" value="ECO:0007669"/>
    <property type="project" value="UniProtKB-UniPathway"/>
</dbReference>
<dbReference type="CDD" id="cd02440">
    <property type="entry name" value="AdoMet_MTases"/>
    <property type="match status" value="1"/>
</dbReference>
<dbReference type="FunFam" id="2.30.140.10:FF:000003">
    <property type="entry name" value="Spermidine synthase 1"/>
    <property type="match status" value="1"/>
</dbReference>
<dbReference type="FunFam" id="3.40.50.150:FF:000048">
    <property type="entry name" value="Spermidine synthase 1"/>
    <property type="match status" value="1"/>
</dbReference>
<dbReference type="Gene3D" id="2.30.140.10">
    <property type="entry name" value="Spermidine synthase, tetramerisation domain"/>
    <property type="match status" value="1"/>
</dbReference>
<dbReference type="Gene3D" id="3.40.50.150">
    <property type="entry name" value="Vaccinia Virus protein VP39"/>
    <property type="match status" value="1"/>
</dbReference>
<dbReference type="HAMAP" id="MF_00198">
    <property type="entry name" value="Spermidine_synth"/>
    <property type="match status" value="1"/>
</dbReference>
<dbReference type="InterPro" id="IPR030374">
    <property type="entry name" value="PABS"/>
</dbReference>
<dbReference type="InterPro" id="IPR030373">
    <property type="entry name" value="PABS_CS"/>
</dbReference>
<dbReference type="InterPro" id="IPR029063">
    <property type="entry name" value="SAM-dependent_MTases_sf"/>
</dbReference>
<dbReference type="InterPro" id="IPR001045">
    <property type="entry name" value="Spermi_synthase"/>
</dbReference>
<dbReference type="InterPro" id="IPR030668">
    <property type="entry name" value="Spermi_synthase_euk"/>
</dbReference>
<dbReference type="InterPro" id="IPR035246">
    <property type="entry name" value="Spermidine_synt_N"/>
</dbReference>
<dbReference type="InterPro" id="IPR037163">
    <property type="entry name" value="Spermidine_synt_N_sf"/>
</dbReference>
<dbReference type="NCBIfam" id="NF002010">
    <property type="entry name" value="PRK00811.1"/>
    <property type="match status" value="1"/>
</dbReference>
<dbReference type="NCBIfam" id="TIGR00417">
    <property type="entry name" value="speE"/>
    <property type="match status" value="1"/>
</dbReference>
<dbReference type="PANTHER" id="PTHR11558:SF11">
    <property type="entry name" value="SPERMIDINE SYNTHASE"/>
    <property type="match status" value="1"/>
</dbReference>
<dbReference type="PANTHER" id="PTHR11558">
    <property type="entry name" value="SPERMIDINE/SPERMINE SYNTHASE"/>
    <property type="match status" value="1"/>
</dbReference>
<dbReference type="Pfam" id="PF17284">
    <property type="entry name" value="Spermine_synt_N"/>
    <property type="match status" value="1"/>
</dbReference>
<dbReference type="Pfam" id="PF01564">
    <property type="entry name" value="Spermine_synth"/>
    <property type="match status" value="1"/>
</dbReference>
<dbReference type="PIRSF" id="PIRSF000502">
    <property type="entry name" value="Spermidine_synth"/>
    <property type="match status" value="1"/>
</dbReference>
<dbReference type="SUPFAM" id="SSF53335">
    <property type="entry name" value="S-adenosyl-L-methionine-dependent methyltransferases"/>
    <property type="match status" value="1"/>
</dbReference>
<dbReference type="PROSITE" id="PS01330">
    <property type="entry name" value="PABS_1"/>
    <property type="match status" value="1"/>
</dbReference>
<dbReference type="PROSITE" id="PS51006">
    <property type="entry name" value="PABS_2"/>
    <property type="match status" value="1"/>
</dbReference>
<organism>
    <name type="scientific">Arabidopsis thaliana</name>
    <name type="common">Mouse-ear cress</name>
    <dbReference type="NCBI Taxonomy" id="3702"/>
    <lineage>
        <taxon>Eukaryota</taxon>
        <taxon>Viridiplantae</taxon>
        <taxon>Streptophyta</taxon>
        <taxon>Embryophyta</taxon>
        <taxon>Tracheophyta</taxon>
        <taxon>Spermatophyta</taxon>
        <taxon>Magnoliopsida</taxon>
        <taxon>eudicotyledons</taxon>
        <taxon>Gunneridae</taxon>
        <taxon>Pentapetalae</taxon>
        <taxon>rosids</taxon>
        <taxon>malvids</taxon>
        <taxon>Brassicales</taxon>
        <taxon>Brassicaceae</taxon>
        <taxon>Camelineae</taxon>
        <taxon>Arabidopsis</taxon>
    </lineage>
</organism>